<name>RECA_PSEE4</name>
<gene>
    <name evidence="1" type="primary">recA</name>
    <name type="ordered locus">PSEEN4128</name>
</gene>
<accession>Q1I6B7</accession>
<keyword id="KW-0067">ATP-binding</keyword>
<keyword id="KW-0963">Cytoplasm</keyword>
<keyword id="KW-0227">DNA damage</keyword>
<keyword id="KW-0233">DNA recombination</keyword>
<keyword id="KW-0234">DNA repair</keyword>
<keyword id="KW-0238">DNA-binding</keyword>
<keyword id="KW-0547">Nucleotide-binding</keyword>
<keyword id="KW-0742">SOS response</keyword>
<dbReference type="EMBL" id="CT573326">
    <property type="protein sequence ID" value="CAK16818.1"/>
    <property type="molecule type" value="Genomic_DNA"/>
</dbReference>
<dbReference type="RefSeq" id="WP_011535189.1">
    <property type="nucleotide sequence ID" value="NC_008027.1"/>
</dbReference>
<dbReference type="SMR" id="Q1I6B7"/>
<dbReference type="STRING" id="384676.PSEEN4128"/>
<dbReference type="GeneID" id="32807142"/>
<dbReference type="KEGG" id="pen:PSEEN4128"/>
<dbReference type="eggNOG" id="COG0468">
    <property type="taxonomic scope" value="Bacteria"/>
</dbReference>
<dbReference type="HOGENOM" id="CLU_040469_3_2_6"/>
<dbReference type="OrthoDB" id="9776733at2"/>
<dbReference type="Proteomes" id="UP000000658">
    <property type="component" value="Chromosome"/>
</dbReference>
<dbReference type="GO" id="GO:0005829">
    <property type="term" value="C:cytosol"/>
    <property type="evidence" value="ECO:0007669"/>
    <property type="project" value="TreeGrafter"/>
</dbReference>
<dbReference type="GO" id="GO:0005524">
    <property type="term" value="F:ATP binding"/>
    <property type="evidence" value="ECO:0007669"/>
    <property type="project" value="UniProtKB-UniRule"/>
</dbReference>
<dbReference type="GO" id="GO:0016887">
    <property type="term" value="F:ATP hydrolysis activity"/>
    <property type="evidence" value="ECO:0007669"/>
    <property type="project" value="InterPro"/>
</dbReference>
<dbReference type="GO" id="GO:0140664">
    <property type="term" value="F:ATP-dependent DNA damage sensor activity"/>
    <property type="evidence" value="ECO:0007669"/>
    <property type="project" value="InterPro"/>
</dbReference>
<dbReference type="GO" id="GO:0003684">
    <property type="term" value="F:damaged DNA binding"/>
    <property type="evidence" value="ECO:0007669"/>
    <property type="project" value="UniProtKB-UniRule"/>
</dbReference>
<dbReference type="GO" id="GO:0003697">
    <property type="term" value="F:single-stranded DNA binding"/>
    <property type="evidence" value="ECO:0007669"/>
    <property type="project" value="UniProtKB-UniRule"/>
</dbReference>
<dbReference type="GO" id="GO:0006310">
    <property type="term" value="P:DNA recombination"/>
    <property type="evidence" value="ECO:0007669"/>
    <property type="project" value="UniProtKB-UniRule"/>
</dbReference>
<dbReference type="GO" id="GO:0006281">
    <property type="term" value="P:DNA repair"/>
    <property type="evidence" value="ECO:0007669"/>
    <property type="project" value="UniProtKB-UniRule"/>
</dbReference>
<dbReference type="GO" id="GO:0009432">
    <property type="term" value="P:SOS response"/>
    <property type="evidence" value="ECO:0007669"/>
    <property type="project" value="UniProtKB-UniRule"/>
</dbReference>
<dbReference type="CDD" id="cd00983">
    <property type="entry name" value="RecA"/>
    <property type="match status" value="1"/>
</dbReference>
<dbReference type="FunFam" id="3.40.50.300:FF:000087">
    <property type="entry name" value="Recombinase RecA"/>
    <property type="match status" value="1"/>
</dbReference>
<dbReference type="Gene3D" id="3.40.50.300">
    <property type="entry name" value="P-loop containing nucleotide triphosphate hydrolases"/>
    <property type="match status" value="1"/>
</dbReference>
<dbReference type="HAMAP" id="MF_00268">
    <property type="entry name" value="RecA"/>
    <property type="match status" value="1"/>
</dbReference>
<dbReference type="InterPro" id="IPR003593">
    <property type="entry name" value="AAA+_ATPase"/>
</dbReference>
<dbReference type="InterPro" id="IPR013765">
    <property type="entry name" value="DNA_recomb/repair_RecA"/>
</dbReference>
<dbReference type="InterPro" id="IPR020584">
    <property type="entry name" value="DNA_recomb/repair_RecA_CS"/>
</dbReference>
<dbReference type="InterPro" id="IPR027417">
    <property type="entry name" value="P-loop_NTPase"/>
</dbReference>
<dbReference type="InterPro" id="IPR049261">
    <property type="entry name" value="RecA-like_C"/>
</dbReference>
<dbReference type="InterPro" id="IPR049428">
    <property type="entry name" value="RecA-like_N"/>
</dbReference>
<dbReference type="InterPro" id="IPR020588">
    <property type="entry name" value="RecA_ATP-bd"/>
</dbReference>
<dbReference type="InterPro" id="IPR023400">
    <property type="entry name" value="RecA_C_sf"/>
</dbReference>
<dbReference type="InterPro" id="IPR020587">
    <property type="entry name" value="RecA_monomer-monomer_interface"/>
</dbReference>
<dbReference type="NCBIfam" id="TIGR02012">
    <property type="entry name" value="tigrfam_recA"/>
    <property type="match status" value="1"/>
</dbReference>
<dbReference type="PANTHER" id="PTHR45900:SF1">
    <property type="entry name" value="MITOCHONDRIAL DNA REPAIR PROTEIN RECA HOMOLOG-RELATED"/>
    <property type="match status" value="1"/>
</dbReference>
<dbReference type="PANTHER" id="PTHR45900">
    <property type="entry name" value="RECA"/>
    <property type="match status" value="1"/>
</dbReference>
<dbReference type="Pfam" id="PF00154">
    <property type="entry name" value="RecA"/>
    <property type="match status" value="1"/>
</dbReference>
<dbReference type="Pfam" id="PF21096">
    <property type="entry name" value="RecA_C"/>
    <property type="match status" value="1"/>
</dbReference>
<dbReference type="PRINTS" id="PR00142">
    <property type="entry name" value="RECA"/>
</dbReference>
<dbReference type="SMART" id="SM00382">
    <property type="entry name" value="AAA"/>
    <property type="match status" value="1"/>
</dbReference>
<dbReference type="SUPFAM" id="SSF52540">
    <property type="entry name" value="P-loop containing nucleoside triphosphate hydrolases"/>
    <property type="match status" value="1"/>
</dbReference>
<dbReference type="SUPFAM" id="SSF54752">
    <property type="entry name" value="RecA protein, C-terminal domain"/>
    <property type="match status" value="1"/>
</dbReference>
<dbReference type="PROSITE" id="PS00321">
    <property type="entry name" value="RECA_1"/>
    <property type="match status" value="1"/>
</dbReference>
<dbReference type="PROSITE" id="PS50162">
    <property type="entry name" value="RECA_2"/>
    <property type="match status" value="1"/>
</dbReference>
<dbReference type="PROSITE" id="PS50163">
    <property type="entry name" value="RECA_3"/>
    <property type="match status" value="1"/>
</dbReference>
<comment type="function">
    <text evidence="1">Can catalyze the hydrolysis of ATP in the presence of single-stranded DNA, the ATP-dependent uptake of single-stranded DNA by duplex DNA, and the ATP-dependent hybridization of homologous single-stranded DNAs. It interacts with LexA causing its activation and leading to its autocatalytic cleavage.</text>
</comment>
<comment type="subcellular location">
    <subcellularLocation>
        <location evidence="1">Cytoplasm</location>
    </subcellularLocation>
</comment>
<comment type="similarity">
    <text evidence="1">Belongs to the RecA family.</text>
</comment>
<sequence>MDDNKKRALAAALGQIERQFGKGAVMRMGDHERQAIPAISTGSLGLDIALGIGGLPKGRIVEIYGPESSGKTTLTLSVIAEAQKNGATCAFVDAEHALDPEYAGKLGVNVDDLLVSQPDTGEQALEITDMLVRSNAVDVIIVDSVAALVPKAEIEGEMGDMHVGLQARLMSQALRKITGNIKNANCLVIFINQIRMKIGVMFGSPETTTGGNALKFYASVRLDIRRTGAVKEGDEVVGSETRVKIVKNKVSPPFRQAEFQILYGKGIYRNGEIIDLGVAQGLVEKSGAWYSYQGNKIGQGKANAAKYLQENPAIGAEIEKQIREKLLTAGAVAAAAKAAAAEADADDMADADAGY</sequence>
<reference key="1">
    <citation type="journal article" date="2006" name="Nat. Biotechnol.">
        <title>Complete genome sequence of the entomopathogenic and metabolically versatile soil bacterium Pseudomonas entomophila.</title>
        <authorList>
            <person name="Vodovar N."/>
            <person name="Vallenet D."/>
            <person name="Cruveiller S."/>
            <person name="Rouy Z."/>
            <person name="Barbe V."/>
            <person name="Acosta C."/>
            <person name="Cattolico L."/>
            <person name="Jubin C."/>
            <person name="Lajus A."/>
            <person name="Segurens B."/>
            <person name="Vacherie B."/>
            <person name="Wincker P."/>
            <person name="Weissenbach J."/>
            <person name="Lemaitre B."/>
            <person name="Medigue C."/>
            <person name="Boccard F."/>
        </authorList>
    </citation>
    <scope>NUCLEOTIDE SEQUENCE [LARGE SCALE GENOMIC DNA]</scope>
    <source>
        <strain>L48</strain>
    </source>
</reference>
<feature type="chain" id="PRO_1000047970" description="Protein RecA">
    <location>
        <begin position="1"/>
        <end position="355"/>
    </location>
</feature>
<feature type="binding site" evidence="1">
    <location>
        <begin position="65"/>
        <end position="72"/>
    </location>
    <ligand>
        <name>ATP</name>
        <dbReference type="ChEBI" id="CHEBI:30616"/>
    </ligand>
</feature>
<proteinExistence type="inferred from homology"/>
<organism>
    <name type="scientific">Pseudomonas entomophila (strain L48)</name>
    <dbReference type="NCBI Taxonomy" id="384676"/>
    <lineage>
        <taxon>Bacteria</taxon>
        <taxon>Pseudomonadati</taxon>
        <taxon>Pseudomonadota</taxon>
        <taxon>Gammaproteobacteria</taxon>
        <taxon>Pseudomonadales</taxon>
        <taxon>Pseudomonadaceae</taxon>
        <taxon>Pseudomonas</taxon>
    </lineage>
</organism>
<evidence type="ECO:0000255" key="1">
    <source>
        <dbReference type="HAMAP-Rule" id="MF_00268"/>
    </source>
</evidence>
<protein>
    <recommendedName>
        <fullName evidence="1">Protein RecA</fullName>
    </recommendedName>
    <alternativeName>
        <fullName evidence="1">Recombinase A</fullName>
    </alternativeName>
</protein>